<dbReference type="PDB" id="1I26">
    <property type="method" value="NMR"/>
    <property type="chains" value="A=1-34"/>
</dbReference>
<dbReference type="PDBsum" id="1I26"/>
<dbReference type="BMRB" id="P58606"/>
<dbReference type="SMR" id="P58606"/>
<dbReference type="EvolutionaryTrace" id="P58606"/>
<dbReference type="GO" id="GO:0005576">
    <property type="term" value="C:extracellular region"/>
    <property type="evidence" value="ECO:0007669"/>
    <property type="project" value="UniProtKB-SubCell"/>
</dbReference>
<dbReference type="GO" id="GO:0019855">
    <property type="term" value="F:calcium channel inhibitor activity"/>
    <property type="evidence" value="ECO:0007669"/>
    <property type="project" value="InterPro"/>
</dbReference>
<dbReference type="GO" id="GO:0090729">
    <property type="term" value="F:toxin activity"/>
    <property type="evidence" value="ECO:0007669"/>
    <property type="project" value="UniProtKB-KW"/>
</dbReference>
<dbReference type="InterPro" id="IPR012325">
    <property type="entry name" value="Assassin_bug_toxin-like"/>
</dbReference>
<dbReference type="Pfam" id="PF08117">
    <property type="entry name" value="Toxin_30"/>
    <property type="match status" value="1"/>
</dbReference>
<dbReference type="SUPFAM" id="SSF57059">
    <property type="entry name" value="omega toxin-like"/>
    <property type="match status" value="1"/>
</dbReference>
<dbReference type="PROSITE" id="PS60010">
    <property type="entry name" value="ASSASSIN_BUG_TOXIN"/>
    <property type="match status" value="1"/>
</dbReference>
<comment type="function">
    <text evidence="1">Binds reversibly and blocks N-type voltage-gated calcium channels (Cav).</text>
</comment>
<comment type="subcellular location">
    <subcellularLocation>
        <location evidence="2">Secreted</location>
    </subcellularLocation>
</comment>
<comment type="domain">
    <text evidence="5">The presence of a 'disulfide through disulfide knot' structurally defines this protein as a knottin.</text>
</comment>
<comment type="mass spectrometry"/>
<comment type="similarity">
    <text evidence="5">Belongs to the venom Ptu1-like knottin family.</text>
</comment>
<organism>
    <name type="scientific">Peirates turpis</name>
    <name type="common">Assassin bug</name>
    <dbReference type="NCBI Taxonomy" id="181095"/>
    <lineage>
        <taxon>Eukaryota</taxon>
        <taxon>Metazoa</taxon>
        <taxon>Ecdysozoa</taxon>
        <taxon>Arthropoda</taxon>
        <taxon>Hexapoda</taxon>
        <taxon>Insecta</taxon>
        <taxon>Pterygota</taxon>
        <taxon>Neoptera</taxon>
        <taxon>Paraneoptera</taxon>
        <taxon>Hemiptera</taxon>
        <taxon>Heteroptera</taxon>
        <taxon>Panheteroptera</taxon>
        <taxon>Cimicomorpha</taxon>
        <taxon>Reduviidae</taxon>
        <taxon>Peiratinae</taxon>
        <taxon>Peirates</taxon>
    </lineage>
</organism>
<reference key="1">
    <citation type="journal article" date="2001" name="FEBS Lett.">
        <title>Novel peptides from assassin bugs (Hemiptera: Reduviidae): isolation, chemical and biological characterization.</title>
        <authorList>
            <person name="Corzo G."/>
            <person name="Adachi-Akahane S."/>
            <person name="Nagao T."/>
            <person name="Kusui Y."/>
            <person name="Nakajima T."/>
        </authorList>
    </citation>
    <scope>PROTEIN SEQUENCE</scope>
    <scope>MASS SPECTROMETRY</scope>
    <scope>SYNTHESIS</scope>
    <scope>SUBCELLULAR LOCATION</scope>
    <source>
        <tissue>Saliva</tissue>
    </source>
</reference>
<reference key="2">
    <citation type="journal article" date="2001" name="Biochemistry">
        <title>Solution structure of Ptu1, a toxin from the assassin bug Peirates turpis that blocks the voltage-sensitive calcium channel N-type.</title>
        <authorList>
            <person name="Bernard C."/>
            <person name="Corzo G."/>
            <person name="Mosbah A."/>
            <person name="Nakajima T."/>
            <person name="Darbon H."/>
        </authorList>
    </citation>
    <scope>STRUCTURE BY NMR</scope>
    <scope>DISULFIDE BONDS</scope>
</reference>
<protein>
    <recommendedName>
        <fullName evidence="4">Toxin Ptu1</fullName>
    </recommendedName>
</protein>
<proteinExistence type="evidence at protein level"/>
<name>PLK1_PEITU</name>
<sequence>AEKDCIAPGAPCFGTDKPCCNPRAWCSSYANKCL</sequence>
<feature type="peptide" id="PRO_0000044891" description="Toxin Ptu1" evidence="2">
    <location>
        <begin position="1"/>
        <end position="34"/>
    </location>
</feature>
<feature type="disulfide bond" evidence="3 6">
    <location>
        <begin position="5"/>
        <end position="20"/>
    </location>
</feature>
<feature type="disulfide bond" evidence="3 6">
    <location>
        <begin position="12"/>
        <end position="26"/>
    </location>
</feature>
<feature type="disulfide bond" evidence="3 6">
    <location>
        <begin position="19"/>
        <end position="33"/>
    </location>
</feature>
<feature type="strand" evidence="7">
    <location>
        <begin position="4"/>
        <end position="6"/>
    </location>
</feature>
<feature type="turn" evidence="7">
    <location>
        <begin position="13"/>
        <end position="16"/>
    </location>
</feature>
<feature type="strand" evidence="7">
    <location>
        <begin position="19"/>
        <end position="21"/>
    </location>
</feature>
<feature type="turn" evidence="7">
    <location>
        <begin position="28"/>
        <end position="31"/>
    </location>
</feature>
<evidence type="ECO:0000250" key="1">
    <source>
        <dbReference type="UniProtKB" id="P58608"/>
    </source>
</evidence>
<evidence type="ECO:0000269" key="2">
    <source>
    </source>
</evidence>
<evidence type="ECO:0000269" key="3">
    <source>
    </source>
</evidence>
<evidence type="ECO:0000303" key="4">
    <source>
    </source>
</evidence>
<evidence type="ECO:0000305" key="5"/>
<evidence type="ECO:0007744" key="6">
    <source>
        <dbReference type="PDB" id="1I26"/>
    </source>
</evidence>
<evidence type="ECO:0007829" key="7">
    <source>
        <dbReference type="PDB" id="1I26"/>
    </source>
</evidence>
<accession>P58606</accession>
<keyword id="KW-0002">3D-structure</keyword>
<keyword id="KW-0108">Calcium channel impairing toxin</keyword>
<keyword id="KW-0903">Direct protein sequencing</keyword>
<keyword id="KW-1015">Disulfide bond</keyword>
<keyword id="KW-0872">Ion channel impairing toxin</keyword>
<keyword id="KW-0960">Knottin</keyword>
<keyword id="KW-0528">Neurotoxin</keyword>
<keyword id="KW-0964">Secreted</keyword>
<keyword id="KW-0800">Toxin</keyword>
<keyword id="KW-1218">Voltage-gated calcium channel impairing toxin</keyword>